<proteinExistence type="evidence at protein level"/>
<comment type="function">
    <text evidence="1 2">Involved in the catabolism of vanillate and syringate. Catalyzes the transfer of a methyl moiety from vanillate or 3-O-methylgallate (3MGA) to tetrahydrofolate, forming protocatechuate (PCA) or gallate, respectively, and methyl-tetrahydrofolate. Has similar activities with both substrates (PubMed:15743951). Cannot use syringate (PubMed:15743951). Uses an ordered, sequential kinetic mechanism (PubMed:28373573).</text>
</comment>
<comment type="catalytic activity">
    <reaction evidence="1 2 3">
        <text>vanillate + (6S)-5,6,7,8-tetrahydrofolate = (6S)-5-methyl-5,6,7,8-tetrahydrofolate + 3,4-dihydroxybenzoate</text>
        <dbReference type="Rhea" id="RHEA:52276"/>
        <dbReference type="ChEBI" id="CHEBI:16632"/>
        <dbReference type="ChEBI" id="CHEBI:18608"/>
        <dbReference type="ChEBI" id="CHEBI:36241"/>
        <dbReference type="ChEBI" id="CHEBI:57453"/>
        <dbReference type="EC" id="2.1.1.341"/>
    </reaction>
    <physiologicalReaction direction="left-to-right" evidence="1 2 3">
        <dbReference type="Rhea" id="RHEA:52277"/>
    </physiologicalReaction>
</comment>
<comment type="catalytic activity">
    <reaction evidence="1">
        <text>3-O-methylgallate + (6S)-5,6,7,8-tetrahydrofolate = 3,4,5-trihydroxybenzoate + (6S)-5-methyl-5,6,7,8-tetrahydrofolate</text>
        <dbReference type="Rhea" id="RHEA:52280"/>
        <dbReference type="ChEBI" id="CHEBI:16918"/>
        <dbReference type="ChEBI" id="CHEBI:18608"/>
        <dbReference type="ChEBI" id="CHEBI:19950"/>
        <dbReference type="ChEBI" id="CHEBI:57453"/>
        <dbReference type="EC" id="2.1.1.341"/>
    </reaction>
    <physiologicalReaction direction="left-to-right" evidence="1">
        <dbReference type="Rhea" id="RHEA:52281"/>
    </physiologicalReaction>
</comment>
<comment type="biophysicochemical properties">
    <kinetics>
        <KM evidence="2">0.63 mM for vanillate</KM>
        <KM evidence="2">0.72 mM for tetrahydrofolate</KM>
        <text evidence="2">kcat is 5.76 sec(-1) with vanillate as substrate.</text>
    </kinetics>
    <phDependence>
        <text evidence="2">Optimum pH is 8 with vanillate as substrate.</text>
    </phDependence>
    <temperatureDependence>
        <text evidence="2">Optimum temperature is 30 degrees Celsius with vanillate as substrate.</text>
    </temperatureDependence>
</comment>
<comment type="pathway">
    <text evidence="6">Secondary metabolite metabolism; lignin degradation.</text>
</comment>
<comment type="subunit">
    <text evidence="3">Homodimer.</text>
</comment>
<comment type="disruption phenotype">
    <text evidence="1">Disruption of the gene leads to significant growth retardation on both vanillate and syringate.</text>
</comment>
<comment type="similarity">
    <text evidence="5">Belongs to the GcvT family.</text>
</comment>
<protein>
    <recommendedName>
        <fullName evidence="4">Vanillate/3-O-methylgallate O-demethylase</fullName>
        <shortName evidence="4">Vanillate/3MGA O-demethylase</shortName>
        <ecNumber evidence="1 2 3">2.1.1.341</ecNumber>
    </recommendedName>
</protein>
<sequence>MSAPTNLEQVLAAGGNTVEMLRNSQIGAYVYPVVAPEFSNWRTEQWAWRNSAVLFDQTHHMVDLYIRGKDALKLLSDTMINSPKGWEPNKAKQYVPVTPYGHVIGDGIIFYLAEEEFVYVGRAPAANWLMYHAQTGGYNVDIVHDDRSPSRPMGKPVQRISWRFQIQGPKAWDVIEKLHGGTLEKLKFFNMAEMNIAGMKIRTLRHGMAGAPGLEIWGPYETQEKARNAILEAGKEFGLIPVGSRAYPSNTLESGWIPSPLPAIYTGDKLKAYREWLPANSYEASGAIGGSFVSSNIEDYYVNPYEIGYGPFVKFDHDFIGRDALEAIDPATQRKKVTLAWNGDDMAKIYASLFDTEADAHYKFFDLPLANYANTNADAVLDAAGNVVGMSMFTGYSYNEKRALSLATIDHEIPVGTELTVLWGEENGGTRKTTVEPHKQMAVRAVVSPVPYSVTARETYEGGWRKAAVTA</sequence>
<accession>G2IQS7</accession>
<accession>Q60FX1</accession>
<dbReference type="EC" id="2.1.1.341" evidence="1 2 3"/>
<dbReference type="EMBL" id="AB186750">
    <property type="protein sequence ID" value="BAD61059.1"/>
    <property type="molecule type" value="Genomic_DNA"/>
</dbReference>
<dbReference type="EMBL" id="AP012222">
    <property type="protein sequence ID" value="BAK65949.1"/>
    <property type="molecule type" value="Genomic_DNA"/>
</dbReference>
<dbReference type="RefSeq" id="WP_014075600.1">
    <property type="nucleotide sequence ID" value="NC_015976.1"/>
</dbReference>
<dbReference type="PDB" id="5TL4">
    <property type="method" value="X-ray"/>
    <property type="resolution" value="1.75 A"/>
    <property type="chains" value="A/B/C/D=1-471"/>
</dbReference>
<dbReference type="PDB" id="5X1I">
    <property type="method" value="X-ray"/>
    <property type="resolution" value="1.90 A"/>
    <property type="chains" value="A/B/C=1-471"/>
</dbReference>
<dbReference type="PDB" id="5X1J">
    <property type="method" value="X-ray"/>
    <property type="resolution" value="1.90 A"/>
    <property type="chains" value="A/B/C=1-471"/>
</dbReference>
<dbReference type="PDB" id="5X1K">
    <property type="method" value="X-ray"/>
    <property type="resolution" value="2.15 A"/>
    <property type="chains" value="A/B/C=1-471"/>
</dbReference>
<dbReference type="PDB" id="5X1L">
    <property type="method" value="X-ray"/>
    <property type="resolution" value="1.90 A"/>
    <property type="chains" value="A/B/C=1-471"/>
</dbReference>
<dbReference type="PDB" id="5X1M">
    <property type="method" value="X-ray"/>
    <property type="resolution" value="1.90 A"/>
    <property type="chains" value="A/B/C=1-471"/>
</dbReference>
<dbReference type="PDB" id="5X1N">
    <property type="method" value="X-ray"/>
    <property type="resolution" value="2.00 A"/>
    <property type="chains" value="A/B=1-471"/>
</dbReference>
<dbReference type="PDBsum" id="5TL4"/>
<dbReference type="PDBsum" id="5X1I"/>
<dbReference type="PDBsum" id="5X1J"/>
<dbReference type="PDBsum" id="5X1K"/>
<dbReference type="PDBsum" id="5X1L"/>
<dbReference type="PDBsum" id="5X1M"/>
<dbReference type="PDBsum" id="5X1N"/>
<dbReference type="SMR" id="G2IQS7"/>
<dbReference type="STRING" id="627192.SLG_12740"/>
<dbReference type="KEGG" id="ssy:SLG_12740"/>
<dbReference type="eggNOG" id="COG0404">
    <property type="taxonomic scope" value="Bacteria"/>
</dbReference>
<dbReference type="HOGENOM" id="CLU_046852_1_0_5"/>
<dbReference type="OrthoDB" id="9772660at2"/>
<dbReference type="BRENDA" id="2.1.1.341">
    <property type="organism ID" value="7695"/>
</dbReference>
<dbReference type="SABIO-RK" id="G2IQS7"/>
<dbReference type="UniPathway" id="UPA00892"/>
<dbReference type="Proteomes" id="UP000001275">
    <property type="component" value="Chromosome"/>
</dbReference>
<dbReference type="GO" id="GO:0008168">
    <property type="term" value="F:methyltransferase activity"/>
    <property type="evidence" value="ECO:0007669"/>
    <property type="project" value="UniProtKB-KW"/>
</dbReference>
<dbReference type="GO" id="GO:0046274">
    <property type="term" value="P:lignin catabolic process"/>
    <property type="evidence" value="ECO:0007669"/>
    <property type="project" value="UniProtKB-UniPathway"/>
</dbReference>
<dbReference type="GO" id="GO:0032259">
    <property type="term" value="P:methylation"/>
    <property type="evidence" value="ECO:0007669"/>
    <property type="project" value="UniProtKB-KW"/>
</dbReference>
<dbReference type="Gene3D" id="3.30.1360.120">
    <property type="entry name" value="Probable tRNA modification gtpase trme, domain 1"/>
    <property type="match status" value="1"/>
</dbReference>
<dbReference type="InterPro" id="IPR006222">
    <property type="entry name" value="GCV_T_N"/>
</dbReference>
<dbReference type="InterPro" id="IPR028896">
    <property type="entry name" value="GcvT/YgfZ/DmdA"/>
</dbReference>
<dbReference type="InterPro" id="IPR027266">
    <property type="entry name" value="TrmE/GcvT_dom1"/>
</dbReference>
<dbReference type="PANTHER" id="PTHR43757">
    <property type="entry name" value="AMINOMETHYLTRANSFERASE"/>
    <property type="match status" value="1"/>
</dbReference>
<dbReference type="PANTHER" id="PTHR43757:SF2">
    <property type="entry name" value="AMINOMETHYLTRANSFERASE, MITOCHONDRIAL"/>
    <property type="match status" value="1"/>
</dbReference>
<dbReference type="Pfam" id="PF01571">
    <property type="entry name" value="GCV_T"/>
    <property type="match status" value="1"/>
</dbReference>
<dbReference type="SUPFAM" id="SSF103025">
    <property type="entry name" value="Folate-binding domain"/>
    <property type="match status" value="1"/>
</dbReference>
<evidence type="ECO:0000269" key="1">
    <source>
    </source>
</evidence>
<evidence type="ECO:0000269" key="2">
    <source>
    </source>
</evidence>
<evidence type="ECO:0000269" key="3">
    <source>
    </source>
</evidence>
<evidence type="ECO:0000303" key="4">
    <source>
    </source>
</evidence>
<evidence type="ECO:0000305" key="5"/>
<evidence type="ECO:0000305" key="6">
    <source>
    </source>
</evidence>
<evidence type="ECO:0000305" key="7">
    <source>
    </source>
</evidence>
<evidence type="ECO:0000305" key="8">
    <source>
    </source>
</evidence>
<evidence type="ECO:0000312" key="9">
    <source>
        <dbReference type="EMBL" id="BAK65949.1"/>
    </source>
</evidence>
<evidence type="ECO:0000312" key="10">
    <source>
        <dbReference type="PDB" id="5X1L"/>
    </source>
</evidence>
<evidence type="ECO:0000312" key="11">
    <source>
        <dbReference type="PDB" id="5X1M"/>
    </source>
</evidence>
<evidence type="ECO:0000312" key="12">
    <source>
        <dbReference type="PDB" id="5X1N"/>
    </source>
</evidence>
<evidence type="ECO:0007744" key="13">
    <source>
        <dbReference type="PDB" id="5TL4"/>
    </source>
</evidence>
<evidence type="ECO:0007744" key="14">
    <source>
        <dbReference type="PDB" id="5X1I"/>
    </source>
</evidence>
<evidence type="ECO:0007744" key="15">
    <source>
        <dbReference type="PDB" id="5X1J"/>
    </source>
</evidence>
<evidence type="ECO:0007744" key="16">
    <source>
        <dbReference type="PDB" id="5X1K"/>
    </source>
</evidence>
<evidence type="ECO:0007829" key="17">
    <source>
        <dbReference type="PDB" id="5TL4"/>
    </source>
</evidence>
<evidence type="ECO:0007829" key="18">
    <source>
        <dbReference type="PDB" id="5X1I"/>
    </source>
</evidence>
<keyword id="KW-0002">3D-structure</keyword>
<keyword id="KW-0439">Lignin degradation</keyword>
<keyword id="KW-0489">Methyltransferase</keyword>
<keyword id="KW-1185">Reference proteome</keyword>
<keyword id="KW-0808">Transferase</keyword>
<organism>
    <name type="scientific">Sphingobium sp. (strain NBRC 103272 / SYK-6)</name>
    <dbReference type="NCBI Taxonomy" id="627192"/>
    <lineage>
        <taxon>Bacteria</taxon>
        <taxon>Pseudomonadati</taxon>
        <taxon>Pseudomonadota</taxon>
        <taxon>Alphaproteobacteria</taxon>
        <taxon>Sphingomonadales</taxon>
        <taxon>Sphingomonadaceae</taxon>
        <taxon>Sphingobium</taxon>
    </lineage>
</organism>
<feature type="chain" id="PRO_0000447131" description="Vanillate/3-O-methylgallate O-demethylase">
    <location>
        <begin position="1"/>
        <end position="471"/>
    </location>
</feature>
<feature type="binding site" evidence="3">
    <location>
        <position position="31"/>
    </location>
    <ligand>
        <name>substrate</name>
    </ligand>
</feature>
<feature type="binding site" evidence="3">
    <location>
        <position position="57"/>
    </location>
    <ligand>
        <name>(6S)-5,6,7,8-tetrahydrofolate</name>
        <dbReference type="ChEBI" id="CHEBI:57453"/>
    </ligand>
</feature>
<feature type="binding site" evidence="3">
    <location>
        <position position="60"/>
    </location>
    <ligand>
        <name>substrate</name>
    </ligand>
</feature>
<feature type="binding site" evidence="3">
    <location>
        <position position="93"/>
    </location>
    <ligand>
        <name>(6S)-5,6,7,8-tetrahydrofolate</name>
        <dbReference type="ChEBI" id="CHEBI:57453"/>
    </ligand>
</feature>
<feature type="binding site" evidence="3">
    <location>
        <position position="120"/>
    </location>
    <ligand>
        <name>(6S)-5,6,7,8-tetrahydrofolate</name>
        <dbReference type="ChEBI" id="CHEBI:57453"/>
    </ligand>
</feature>
<feature type="binding site" evidence="3">
    <location>
        <position position="122"/>
    </location>
    <ligand>
        <name>substrate</name>
    </ligand>
</feature>
<feature type="binding site" evidence="3">
    <location>
        <position position="165"/>
    </location>
    <ligand>
        <name>(6S)-5,6,7,8-tetrahydrofolate</name>
        <dbReference type="ChEBI" id="CHEBI:57453"/>
    </ligand>
</feature>
<feature type="binding site" evidence="3">
    <location>
        <position position="215"/>
    </location>
    <ligand>
        <name>(6S)-5,6,7,8-tetrahydrofolate</name>
        <dbReference type="ChEBI" id="CHEBI:57453"/>
    </ligand>
</feature>
<feature type="binding site" evidence="3">
    <location>
        <begin position="247"/>
        <end position="250"/>
    </location>
    <ligand>
        <name>substrate</name>
    </ligand>
</feature>
<feature type="binding site" evidence="3">
    <location>
        <position position="256"/>
    </location>
    <ligand>
        <name>(6S)-5,6,7,8-tetrahydrofolate</name>
        <dbReference type="ChEBI" id="CHEBI:57453"/>
    </ligand>
</feature>
<feature type="site" description="Important for activity" evidence="8">
    <location>
        <position position="60"/>
    </location>
</feature>
<feature type="site" description="Important for activity" evidence="7 8">
    <location>
        <position position="247"/>
    </location>
</feature>
<feature type="mutagenesis site" description="Almost loss of activity on vanillate." evidence="2">
    <original>Y</original>
    <variation>A</variation>
    <location>
        <position position="29"/>
    </location>
</feature>
<feature type="mutagenesis site" description="Almost loss or loss of activity on vanillate." evidence="2 3">
    <original>Y</original>
    <variation>A</variation>
    <location>
        <position position="31"/>
    </location>
</feature>
<feature type="mutagenesis site" description="Almost loss or loss of activity on vanillate." evidence="2 3">
    <original>H</original>
    <variation>A</variation>
    <location>
        <position position="60"/>
    </location>
</feature>
<feature type="mutagenesis site" description="Almost loss of activity on vanillate." evidence="2">
    <original>M</original>
    <variation>A</variation>
    <location>
        <position position="61"/>
    </location>
</feature>
<feature type="mutagenesis site" description="No change in activity on vanillate." evidence="2">
    <original>V</original>
    <variation>A</variation>
    <location>
        <position position="62"/>
    </location>
</feature>
<feature type="mutagenesis site" description="Strong decrease in activity on vanillate. Loss of activity on vanillate; when associated with A-147." evidence="2">
    <original>R</original>
    <variation>A</variation>
    <location>
        <position position="122"/>
    </location>
</feature>
<feature type="mutagenesis site" description="Loss of activity on vanillate; when associated with A-122." evidence="2">
    <original>R</original>
    <variation>A</variation>
    <location>
        <position position="147"/>
    </location>
</feature>
<feature type="mutagenesis site" description="Loss of activity on vanillate." evidence="2 3">
    <original>Y</original>
    <variation>F</variation>
    <location>
        <position position="247"/>
    </location>
</feature>
<feature type="sequence conflict" description="In Ref. 1; BAD61059." evidence="5" ref="1">
    <original>A</original>
    <variation>T</variation>
    <location>
        <position position="3"/>
    </location>
</feature>
<feature type="helix" evidence="17">
    <location>
        <begin position="7"/>
        <end position="13"/>
    </location>
</feature>
<feature type="strand" evidence="17">
    <location>
        <begin position="14"/>
        <end position="16"/>
    </location>
</feature>
<feature type="helix" evidence="17">
    <location>
        <begin position="17"/>
        <end position="22"/>
    </location>
</feature>
<feature type="helix" evidence="17">
    <location>
        <begin position="41"/>
        <end position="50"/>
    </location>
</feature>
<feature type="strand" evidence="17">
    <location>
        <begin position="51"/>
        <end position="56"/>
    </location>
</feature>
<feature type="strand" evidence="17">
    <location>
        <begin position="58"/>
        <end position="68"/>
    </location>
</feature>
<feature type="helix" evidence="17">
    <location>
        <begin position="71"/>
        <end position="78"/>
    </location>
</feature>
<feature type="strand" evidence="17">
    <location>
        <begin position="90"/>
        <end position="94"/>
    </location>
</feature>
<feature type="strand" evidence="17">
    <location>
        <begin position="107"/>
        <end position="113"/>
    </location>
</feature>
<feature type="strand" evidence="17">
    <location>
        <begin position="116"/>
        <end position="121"/>
    </location>
</feature>
<feature type="helix" evidence="17">
    <location>
        <begin position="123"/>
        <end position="135"/>
    </location>
</feature>
<feature type="strand" evidence="17">
    <location>
        <begin position="141"/>
        <end position="145"/>
    </location>
</feature>
<feature type="strand" evidence="17">
    <location>
        <begin position="160"/>
        <end position="168"/>
    </location>
</feature>
<feature type="helix" evidence="17">
    <location>
        <begin position="171"/>
        <end position="179"/>
    </location>
</feature>
<feature type="strand" evidence="17">
    <location>
        <begin position="190"/>
        <end position="196"/>
    </location>
</feature>
<feature type="strand" evidence="17">
    <location>
        <begin position="199"/>
        <end position="206"/>
    </location>
</feature>
<feature type="strand" evidence="17">
    <location>
        <begin position="213"/>
        <end position="219"/>
    </location>
</feature>
<feature type="helix" evidence="17">
    <location>
        <begin position="220"/>
        <end position="222"/>
    </location>
</feature>
<feature type="helix" evidence="17">
    <location>
        <begin position="223"/>
        <end position="234"/>
    </location>
</feature>
<feature type="helix" evidence="17">
    <location>
        <begin position="235"/>
        <end position="237"/>
    </location>
</feature>
<feature type="strand" evidence="17">
    <location>
        <begin position="239"/>
        <end position="242"/>
    </location>
</feature>
<feature type="turn" evidence="17">
    <location>
        <begin position="244"/>
        <end position="246"/>
    </location>
</feature>
<feature type="helix" evidence="17">
    <location>
        <begin position="247"/>
        <end position="249"/>
    </location>
</feature>
<feature type="helix" evidence="17">
    <location>
        <begin position="250"/>
        <end position="254"/>
    </location>
</feature>
<feature type="helix" evidence="17">
    <location>
        <begin position="268"/>
        <end position="270"/>
    </location>
</feature>
<feature type="helix" evidence="17">
    <location>
        <begin position="271"/>
        <end position="276"/>
    </location>
</feature>
<feature type="helix" evidence="17">
    <location>
        <begin position="282"/>
        <end position="285"/>
    </location>
</feature>
<feature type="strand" evidence="17">
    <location>
        <begin position="288"/>
        <end position="291"/>
    </location>
</feature>
<feature type="helix" evidence="17">
    <location>
        <begin position="297"/>
        <end position="300"/>
    </location>
</feature>
<feature type="helix" evidence="17">
    <location>
        <begin position="304"/>
        <end position="307"/>
    </location>
</feature>
<feature type="helix" evidence="17">
    <location>
        <begin position="310"/>
        <end position="312"/>
    </location>
</feature>
<feature type="strand" evidence="18">
    <location>
        <begin position="315"/>
        <end position="317"/>
    </location>
</feature>
<feature type="helix" evidence="17">
    <location>
        <begin position="322"/>
        <end position="326"/>
    </location>
</feature>
<feature type="helix" evidence="17">
    <location>
        <begin position="330"/>
        <end position="332"/>
    </location>
</feature>
<feature type="strand" evidence="17">
    <location>
        <begin position="335"/>
        <end position="341"/>
    </location>
</feature>
<feature type="helix" evidence="17">
    <location>
        <begin position="343"/>
        <end position="351"/>
    </location>
</feature>
<feature type="helix" evidence="17">
    <location>
        <begin position="352"/>
        <end position="354"/>
    </location>
</feature>
<feature type="strand" evidence="17">
    <location>
        <begin position="367"/>
        <end position="369"/>
    </location>
</feature>
<feature type="strand" evidence="17">
    <location>
        <begin position="373"/>
        <end position="376"/>
    </location>
</feature>
<feature type="strand" evidence="17">
    <location>
        <begin position="378"/>
        <end position="381"/>
    </location>
</feature>
<feature type="strand" evidence="17">
    <location>
        <begin position="387"/>
        <end position="397"/>
    </location>
</feature>
<feature type="turn" evidence="17">
    <location>
        <begin position="398"/>
        <end position="401"/>
    </location>
</feature>
<feature type="strand" evidence="17">
    <location>
        <begin position="402"/>
        <end position="409"/>
    </location>
</feature>
<feature type="strand" evidence="17">
    <location>
        <begin position="418"/>
        <end position="424"/>
    </location>
</feature>
<feature type="helix" evidence="17">
    <location>
        <begin position="426"/>
        <end position="428"/>
    </location>
</feature>
<feature type="strand" evidence="17">
    <location>
        <begin position="441"/>
        <end position="448"/>
    </location>
</feature>
<name>LIGM_SPHSK</name>
<reference key="1">
    <citation type="journal article" date="2005" name="J. Bacteriol.">
        <title>A tetrahydrofolate-dependent O-demethylase, LigM, is crucial for catabolism of vanillate and syringate in Sphingomonas paucimobilis SYK-6.</title>
        <authorList>
            <person name="Abe T."/>
            <person name="Masai E."/>
            <person name="Miyauchi K."/>
            <person name="Katayama Y."/>
            <person name="Fukuda M."/>
        </authorList>
    </citation>
    <scope>NUCLEOTIDE SEQUENCE [GENOMIC DNA]</scope>
    <scope>FUNCTION</scope>
    <scope>CATALYTIC ACTIVITY</scope>
    <scope>PATHWAY</scope>
    <scope>DISRUPTION PHENOTYPE</scope>
    <source>
        <strain>NBRC 103272 / SYK-6</strain>
    </source>
</reference>
<reference key="2">
    <citation type="journal article" date="2012" name="J. Bacteriol.">
        <title>Complete genome sequence of Sphingobium sp. strain SYK-6, a degrader of lignin-derived biaryls and monoaryls.</title>
        <authorList>
            <person name="Masai E."/>
            <person name="Kamimura N."/>
            <person name="Kasai D."/>
            <person name="Oguchi A."/>
            <person name="Ankai A."/>
            <person name="Fukui S."/>
            <person name="Takahashi M."/>
            <person name="Yashiro I."/>
            <person name="Sasaki H."/>
            <person name="Harada T."/>
            <person name="Nakamura S."/>
            <person name="Katano Y."/>
            <person name="Narita-Yamada S."/>
            <person name="Nakazawa H."/>
            <person name="Hara H."/>
            <person name="Katayama Y."/>
            <person name="Fukuda M."/>
            <person name="Yamazaki S."/>
            <person name="Fujita N."/>
        </authorList>
    </citation>
    <scope>NUCLEOTIDE SEQUENCE [LARGE SCALE GENOMIC DNA]</scope>
    <source>
        <strain>NBRC 103272 / SYK-6</strain>
    </source>
</reference>
<reference evidence="13" key="3">
    <citation type="journal article" date="2017" name="Proc. Natl. Acad. Sci. U.S.A.">
        <title>Structure of aryl O-demethylase offers molecular insight into a catalytic tyrosine-dependent mechanism.</title>
        <authorList>
            <person name="Kohler A.C."/>
            <person name="Mills M.J.L."/>
            <person name="Adams P.D."/>
            <person name="Simmons B.A."/>
            <person name="Sale K.L."/>
        </authorList>
    </citation>
    <scope>X-RAY CRYSTALLOGRAPHY (1.75 ANGSTROMS)</scope>
    <scope>FUNCTION</scope>
    <scope>CATALYTIC ACTIVITY</scope>
    <scope>BIOPHYSICOCHEMICAL PROPERTIES</scope>
    <scope>MUTAGENESIS OF TYR-29; TYR-31; HIS-60; MET-61; VAL-62; ARG-122; ARG-147 AND TYR-247</scope>
</reference>
<reference evidence="10 11 12 14 15 16" key="4">
    <citation type="journal article" date="2017" name="FEBS J.">
        <title>The crystal structure of a new O-demethylase from Sphingobium sp. strain SYK-6.</title>
        <authorList>
            <person name="Harada A."/>
            <person name="Kamimura N."/>
            <person name="Takeuchi K."/>
            <person name="Yu H.Y."/>
            <person name="Masai E."/>
            <person name="Senda T."/>
        </authorList>
    </citation>
    <scope>X-RAY CRYSTALLOGRAPHY (1.90 ANGSTROMS) OF APOENZYME AND IN COMPLEXES WITH VANILLATE; 3MGA; PCA AND TETRAHYDROFOLATE</scope>
    <scope>CATALYTIC ACTIVITY</scope>
    <scope>SUBUNIT</scope>
    <scope>MUTAGENESIS OF TYR-31; HIS-60 AND TYR-247</scope>
    <source>
        <strain>NBRC 103272 / SYK-6</strain>
    </source>
</reference>
<gene>
    <name evidence="4" type="primary">ligM</name>
    <name evidence="9" type="ORF">SLG_12740</name>
</gene>